<keyword id="KW-0963">Cytoplasm</keyword>
<keyword id="KW-0489">Methyltransferase</keyword>
<keyword id="KW-1185">Reference proteome</keyword>
<keyword id="KW-0698">rRNA processing</keyword>
<keyword id="KW-0949">S-adenosyl-L-methionine</keyword>
<keyword id="KW-0808">Transferase</keyword>
<name>RSMG_NITHX</name>
<gene>
    <name evidence="1" type="primary">rsmG</name>
    <name type="ordered locus">Nham_0104</name>
</gene>
<organism>
    <name type="scientific">Nitrobacter hamburgensis (strain DSM 10229 / NCIMB 13809 / X14)</name>
    <dbReference type="NCBI Taxonomy" id="323097"/>
    <lineage>
        <taxon>Bacteria</taxon>
        <taxon>Pseudomonadati</taxon>
        <taxon>Pseudomonadota</taxon>
        <taxon>Alphaproteobacteria</taxon>
        <taxon>Hyphomicrobiales</taxon>
        <taxon>Nitrobacteraceae</taxon>
        <taxon>Nitrobacter</taxon>
    </lineage>
</organism>
<protein>
    <recommendedName>
        <fullName evidence="1">Ribosomal RNA small subunit methyltransferase G</fullName>
        <ecNumber evidence="1">2.1.1.170</ecNumber>
    </recommendedName>
    <alternativeName>
        <fullName evidence="1">16S rRNA 7-methylguanosine methyltransferase</fullName>
        <shortName evidence="1">16S rRNA m7G methyltransferase</shortName>
    </alternativeName>
</protein>
<evidence type="ECO:0000255" key="1">
    <source>
        <dbReference type="HAMAP-Rule" id="MF_00074"/>
    </source>
</evidence>
<sequence length="260" mass="28469">MADWQKAHGRLQRDVAGNRTVPYAGADAMTRPRQAQSPLSAADKAAALALTPVSRETEARLDAYVDLLVQWQTKTNLIASSTLPQLWTRHIADSLQLLALAPQAKRWADFGSGGGFPGVVLACALADVEGARIDLVERNAKKAAFLREAVRITGTPGVIHPMDIGDYVDRLDGRIDCVTARALAPLQVLLGFAEPLVKQGAKALLLKGQDVEAELTEATKYWNIEPRLHSSRTGGQGWIVELDRIERRDRPPTKQAWRRA</sequence>
<dbReference type="EC" id="2.1.1.170" evidence="1"/>
<dbReference type="EMBL" id="CP000319">
    <property type="protein sequence ID" value="ABE61005.1"/>
    <property type="molecule type" value="Genomic_DNA"/>
</dbReference>
<dbReference type="SMR" id="Q1QRZ2"/>
<dbReference type="STRING" id="323097.Nham_0104"/>
<dbReference type="KEGG" id="nha:Nham_0104"/>
<dbReference type="eggNOG" id="COG0357">
    <property type="taxonomic scope" value="Bacteria"/>
</dbReference>
<dbReference type="HOGENOM" id="CLU_065341_1_0_5"/>
<dbReference type="Proteomes" id="UP000001953">
    <property type="component" value="Chromosome"/>
</dbReference>
<dbReference type="GO" id="GO:0005829">
    <property type="term" value="C:cytosol"/>
    <property type="evidence" value="ECO:0007669"/>
    <property type="project" value="TreeGrafter"/>
</dbReference>
<dbReference type="GO" id="GO:0070043">
    <property type="term" value="F:rRNA (guanine-N7-)-methyltransferase activity"/>
    <property type="evidence" value="ECO:0007669"/>
    <property type="project" value="UniProtKB-UniRule"/>
</dbReference>
<dbReference type="Gene3D" id="3.40.50.150">
    <property type="entry name" value="Vaccinia Virus protein VP39"/>
    <property type="match status" value="1"/>
</dbReference>
<dbReference type="HAMAP" id="MF_00074">
    <property type="entry name" value="16SrRNA_methyltr_G"/>
    <property type="match status" value="1"/>
</dbReference>
<dbReference type="InterPro" id="IPR003682">
    <property type="entry name" value="rRNA_ssu_MeTfrase_G"/>
</dbReference>
<dbReference type="InterPro" id="IPR029063">
    <property type="entry name" value="SAM-dependent_MTases_sf"/>
</dbReference>
<dbReference type="NCBIfam" id="TIGR00138">
    <property type="entry name" value="rsmG_gidB"/>
    <property type="match status" value="1"/>
</dbReference>
<dbReference type="PANTHER" id="PTHR31760">
    <property type="entry name" value="S-ADENOSYL-L-METHIONINE-DEPENDENT METHYLTRANSFERASES SUPERFAMILY PROTEIN"/>
    <property type="match status" value="1"/>
</dbReference>
<dbReference type="PANTHER" id="PTHR31760:SF0">
    <property type="entry name" value="S-ADENOSYL-L-METHIONINE-DEPENDENT METHYLTRANSFERASES SUPERFAMILY PROTEIN"/>
    <property type="match status" value="1"/>
</dbReference>
<dbReference type="Pfam" id="PF02527">
    <property type="entry name" value="GidB"/>
    <property type="match status" value="1"/>
</dbReference>
<dbReference type="SUPFAM" id="SSF53335">
    <property type="entry name" value="S-adenosyl-L-methionine-dependent methyltransferases"/>
    <property type="match status" value="1"/>
</dbReference>
<reference key="1">
    <citation type="submission" date="2006-03" db="EMBL/GenBank/DDBJ databases">
        <title>Complete sequence of chromosome of Nitrobacter hamburgensis X14.</title>
        <authorList>
            <consortium name="US DOE Joint Genome Institute"/>
            <person name="Copeland A."/>
            <person name="Lucas S."/>
            <person name="Lapidus A."/>
            <person name="Barry K."/>
            <person name="Detter J.C."/>
            <person name="Glavina del Rio T."/>
            <person name="Hammon N."/>
            <person name="Israni S."/>
            <person name="Dalin E."/>
            <person name="Tice H."/>
            <person name="Pitluck S."/>
            <person name="Chain P."/>
            <person name="Malfatti S."/>
            <person name="Shin M."/>
            <person name="Vergez L."/>
            <person name="Schmutz J."/>
            <person name="Larimer F."/>
            <person name="Land M."/>
            <person name="Hauser L."/>
            <person name="Kyrpides N."/>
            <person name="Ivanova N."/>
            <person name="Ward B."/>
            <person name="Arp D."/>
            <person name="Klotz M."/>
            <person name="Stein L."/>
            <person name="O'Mullan G."/>
            <person name="Starkenburg S."/>
            <person name="Sayavedra L."/>
            <person name="Poret-Peterson A.T."/>
            <person name="Gentry M.E."/>
            <person name="Bruce D."/>
            <person name="Richardson P."/>
        </authorList>
    </citation>
    <scope>NUCLEOTIDE SEQUENCE [LARGE SCALE GENOMIC DNA]</scope>
    <source>
        <strain>DSM 10229 / NCIMB 13809 / X14</strain>
    </source>
</reference>
<accession>Q1QRZ2</accession>
<feature type="chain" id="PRO_0000335383" description="Ribosomal RNA small subunit methyltransferase G">
    <location>
        <begin position="1"/>
        <end position="260"/>
    </location>
</feature>
<feature type="binding site" evidence="1">
    <location>
        <position position="111"/>
    </location>
    <ligand>
        <name>S-adenosyl-L-methionine</name>
        <dbReference type="ChEBI" id="CHEBI:59789"/>
    </ligand>
</feature>
<feature type="binding site" evidence="1">
    <location>
        <position position="116"/>
    </location>
    <ligand>
        <name>S-adenosyl-L-methionine</name>
        <dbReference type="ChEBI" id="CHEBI:59789"/>
    </ligand>
</feature>
<feature type="binding site" evidence="1">
    <location>
        <position position="181"/>
    </location>
    <ligand>
        <name>S-adenosyl-L-methionine</name>
        <dbReference type="ChEBI" id="CHEBI:59789"/>
    </ligand>
</feature>
<proteinExistence type="inferred from homology"/>
<comment type="function">
    <text evidence="1">Specifically methylates the N7 position of guanine in position 527 of 16S rRNA.</text>
</comment>
<comment type="catalytic activity">
    <reaction evidence="1">
        <text>guanosine(527) in 16S rRNA + S-adenosyl-L-methionine = N(7)-methylguanosine(527) in 16S rRNA + S-adenosyl-L-homocysteine</text>
        <dbReference type="Rhea" id="RHEA:42732"/>
        <dbReference type="Rhea" id="RHEA-COMP:10209"/>
        <dbReference type="Rhea" id="RHEA-COMP:10210"/>
        <dbReference type="ChEBI" id="CHEBI:57856"/>
        <dbReference type="ChEBI" id="CHEBI:59789"/>
        <dbReference type="ChEBI" id="CHEBI:74269"/>
        <dbReference type="ChEBI" id="CHEBI:74480"/>
        <dbReference type="EC" id="2.1.1.170"/>
    </reaction>
</comment>
<comment type="subcellular location">
    <subcellularLocation>
        <location evidence="1">Cytoplasm</location>
    </subcellularLocation>
</comment>
<comment type="similarity">
    <text evidence="1">Belongs to the methyltransferase superfamily. RNA methyltransferase RsmG family.</text>
</comment>